<name>PSBT_GLOC7</name>
<evidence type="ECO:0000255" key="1">
    <source>
        <dbReference type="HAMAP-Rule" id="MF_00808"/>
    </source>
</evidence>
<sequence>MESVAYILILTMALAVLFFAIAFREPPRIEK</sequence>
<comment type="function">
    <text evidence="1">Found at the monomer-monomer interface of the photosystem II (PS II) dimer, plays a role in assembly and dimerization of PSII. PSII is a light-driven water plastoquinone oxidoreductase, using light energy to abstract electrons from H(2)O, generating a proton gradient subsequently used for ATP formation.</text>
</comment>
<comment type="subunit">
    <text evidence="1">PSII is composed of 1 copy each of membrane proteins PsbA, PsbB, PsbC, PsbD, PsbE, PsbF, PsbH, PsbI, PsbJ, PsbK, PsbL, PsbM, PsbT, PsbX, PsbY, PsbZ, Psb30/Ycf12, peripheral proteins PsbO, CyanoQ (PsbQ), PsbU, PsbV and a large number of cofactors. It forms dimeric complexes.</text>
</comment>
<comment type="subcellular location">
    <subcellularLocation>
        <location evidence="1">Cellular thylakoid membrane</location>
        <topology evidence="1">Single-pass membrane protein</topology>
    </subcellularLocation>
</comment>
<comment type="similarity">
    <text evidence="1">Belongs to the PsbT family.</text>
</comment>
<protein>
    <recommendedName>
        <fullName evidence="1">Photosystem II reaction center protein T</fullName>
        <shortName evidence="1">PSII-T</shortName>
    </recommendedName>
</protein>
<dbReference type="EMBL" id="CP001291">
    <property type="protein sequence ID" value="ACK71884.1"/>
    <property type="molecule type" value="Genomic_DNA"/>
</dbReference>
<dbReference type="RefSeq" id="WP_013321375.1">
    <property type="nucleotide sequence ID" value="NC_011729.1"/>
</dbReference>
<dbReference type="SMR" id="B7KFG8"/>
<dbReference type="STRING" id="65393.PCC7424_3492"/>
<dbReference type="KEGG" id="cyc:PCC7424_3492"/>
<dbReference type="eggNOG" id="ENOG5033APQ">
    <property type="taxonomic scope" value="Bacteria"/>
</dbReference>
<dbReference type="HOGENOM" id="CLU_217078_1_0_3"/>
<dbReference type="OrthoDB" id="427659at2"/>
<dbReference type="Proteomes" id="UP000002384">
    <property type="component" value="Chromosome"/>
</dbReference>
<dbReference type="GO" id="GO:0009539">
    <property type="term" value="C:photosystem II reaction center"/>
    <property type="evidence" value="ECO:0007669"/>
    <property type="project" value="InterPro"/>
</dbReference>
<dbReference type="GO" id="GO:0031676">
    <property type="term" value="C:plasma membrane-derived thylakoid membrane"/>
    <property type="evidence" value="ECO:0007669"/>
    <property type="project" value="UniProtKB-SubCell"/>
</dbReference>
<dbReference type="GO" id="GO:0015979">
    <property type="term" value="P:photosynthesis"/>
    <property type="evidence" value="ECO:0007669"/>
    <property type="project" value="UniProtKB-UniRule"/>
</dbReference>
<dbReference type="HAMAP" id="MF_00808">
    <property type="entry name" value="PSII_PsbT"/>
    <property type="match status" value="1"/>
</dbReference>
<dbReference type="InterPro" id="IPR001743">
    <property type="entry name" value="PSII_PsbT"/>
</dbReference>
<dbReference type="InterPro" id="IPR037268">
    <property type="entry name" value="PSII_PsbT_sf"/>
</dbReference>
<dbReference type="NCBIfam" id="NF008825">
    <property type="entry name" value="PRK11875.1"/>
    <property type="match status" value="1"/>
</dbReference>
<dbReference type="PANTHER" id="PTHR36411">
    <property type="match status" value="1"/>
</dbReference>
<dbReference type="PANTHER" id="PTHR36411:SF2">
    <property type="entry name" value="PHOTOSYSTEM II REACTION CENTER PROTEIN T"/>
    <property type="match status" value="1"/>
</dbReference>
<dbReference type="Pfam" id="PF01405">
    <property type="entry name" value="PsbT"/>
    <property type="match status" value="1"/>
</dbReference>
<dbReference type="SUPFAM" id="SSF161029">
    <property type="entry name" value="Photosystem II reaction center protein T, PsbT"/>
    <property type="match status" value="1"/>
</dbReference>
<accession>B7KFG8</accession>
<reference key="1">
    <citation type="journal article" date="2011" name="MBio">
        <title>Novel metabolic attributes of the genus Cyanothece, comprising a group of unicellular nitrogen-fixing Cyanobacteria.</title>
        <authorList>
            <person name="Bandyopadhyay A."/>
            <person name="Elvitigala T."/>
            <person name="Welsh E."/>
            <person name="Stockel J."/>
            <person name="Liberton M."/>
            <person name="Min H."/>
            <person name="Sherman L.A."/>
            <person name="Pakrasi H.B."/>
        </authorList>
    </citation>
    <scope>NUCLEOTIDE SEQUENCE [LARGE SCALE GENOMIC DNA]</scope>
    <source>
        <strain>PCC 7424</strain>
    </source>
</reference>
<organism>
    <name type="scientific">Gloeothece citriformis (strain PCC 7424)</name>
    <name type="common">Cyanothece sp. (strain PCC 7424)</name>
    <dbReference type="NCBI Taxonomy" id="65393"/>
    <lineage>
        <taxon>Bacteria</taxon>
        <taxon>Bacillati</taxon>
        <taxon>Cyanobacteriota</taxon>
        <taxon>Cyanophyceae</taxon>
        <taxon>Oscillatoriophycideae</taxon>
        <taxon>Chroococcales</taxon>
        <taxon>Aphanothecaceae</taxon>
        <taxon>Gloeothece</taxon>
        <taxon>Gloeothece citriformis</taxon>
    </lineage>
</organism>
<keyword id="KW-0472">Membrane</keyword>
<keyword id="KW-0602">Photosynthesis</keyword>
<keyword id="KW-0604">Photosystem II</keyword>
<keyword id="KW-1185">Reference proteome</keyword>
<keyword id="KW-0793">Thylakoid</keyword>
<keyword id="KW-0812">Transmembrane</keyword>
<keyword id="KW-1133">Transmembrane helix</keyword>
<feature type="chain" id="PRO_1000134014" description="Photosystem II reaction center protein T">
    <location>
        <begin position="1"/>
        <end position="31"/>
    </location>
</feature>
<feature type="transmembrane region" description="Helical" evidence="1">
    <location>
        <begin position="3"/>
        <end position="23"/>
    </location>
</feature>
<gene>
    <name evidence="1" type="primary">psbT</name>
    <name type="ordered locus">PCC7424_3492</name>
</gene>
<proteinExistence type="inferred from homology"/>